<name>RS4_PSYWF</name>
<accession>A5WCL3</accession>
<dbReference type="EMBL" id="CP000713">
    <property type="protein sequence ID" value="ABQ93404.1"/>
    <property type="molecule type" value="Genomic_DNA"/>
</dbReference>
<dbReference type="SMR" id="A5WCL3"/>
<dbReference type="STRING" id="349106.PsycPRwf_0449"/>
<dbReference type="KEGG" id="prw:PsycPRwf_0449"/>
<dbReference type="eggNOG" id="COG0522">
    <property type="taxonomic scope" value="Bacteria"/>
</dbReference>
<dbReference type="HOGENOM" id="CLU_092403_0_2_6"/>
<dbReference type="GO" id="GO:0015935">
    <property type="term" value="C:small ribosomal subunit"/>
    <property type="evidence" value="ECO:0007669"/>
    <property type="project" value="InterPro"/>
</dbReference>
<dbReference type="GO" id="GO:0019843">
    <property type="term" value="F:rRNA binding"/>
    <property type="evidence" value="ECO:0007669"/>
    <property type="project" value="UniProtKB-UniRule"/>
</dbReference>
<dbReference type="GO" id="GO:0003735">
    <property type="term" value="F:structural constituent of ribosome"/>
    <property type="evidence" value="ECO:0007669"/>
    <property type="project" value="InterPro"/>
</dbReference>
<dbReference type="GO" id="GO:0042274">
    <property type="term" value="P:ribosomal small subunit biogenesis"/>
    <property type="evidence" value="ECO:0007669"/>
    <property type="project" value="TreeGrafter"/>
</dbReference>
<dbReference type="GO" id="GO:0006412">
    <property type="term" value="P:translation"/>
    <property type="evidence" value="ECO:0007669"/>
    <property type="project" value="UniProtKB-UniRule"/>
</dbReference>
<dbReference type="CDD" id="cd00165">
    <property type="entry name" value="S4"/>
    <property type="match status" value="1"/>
</dbReference>
<dbReference type="FunFam" id="1.10.1050.10:FF:000001">
    <property type="entry name" value="30S ribosomal protein S4"/>
    <property type="match status" value="1"/>
</dbReference>
<dbReference type="FunFam" id="3.10.290.10:FF:000001">
    <property type="entry name" value="30S ribosomal protein S4"/>
    <property type="match status" value="1"/>
</dbReference>
<dbReference type="Gene3D" id="1.10.1050.10">
    <property type="entry name" value="Ribosomal Protein S4 Delta 41, Chain A, domain 1"/>
    <property type="match status" value="1"/>
</dbReference>
<dbReference type="Gene3D" id="3.10.290.10">
    <property type="entry name" value="RNA-binding S4 domain"/>
    <property type="match status" value="1"/>
</dbReference>
<dbReference type="HAMAP" id="MF_01306_B">
    <property type="entry name" value="Ribosomal_uS4_B"/>
    <property type="match status" value="1"/>
</dbReference>
<dbReference type="InterPro" id="IPR022801">
    <property type="entry name" value="Ribosomal_uS4"/>
</dbReference>
<dbReference type="InterPro" id="IPR005709">
    <property type="entry name" value="Ribosomal_uS4_bac-type"/>
</dbReference>
<dbReference type="InterPro" id="IPR018079">
    <property type="entry name" value="Ribosomal_uS4_CS"/>
</dbReference>
<dbReference type="InterPro" id="IPR001912">
    <property type="entry name" value="Ribosomal_uS4_N"/>
</dbReference>
<dbReference type="InterPro" id="IPR002942">
    <property type="entry name" value="S4_RNA-bd"/>
</dbReference>
<dbReference type="InterPro" id="IPR036986">
    <property type="entry name" value="S4_RNA-bd_sf"/>
</dbReference>
<dbReference type="NCBIfam" id="NF003717">
    <property type="entry name" value="PRK05327.1"/>
    <property type="match status" value="1"/>
</dbReference>
<dbReference type="NCBIfam" id="TIGR01017">
    <property type="entry name" value="rpsD_bact"/>
    <property type="match status" value="1"/>
</dbReference>
<dbReference type="PANTHER" id="PTHR11831">
    <property type="entry name" value="30S 40S RIBOSOMAL PROTEIN"/>
    <property type="match status" value="1"/>
</dbReference>
<dbReference type="PANTHER" id="PTHR11831:SF4">
    <property type="entry name" value="SMALL RIBOSOMAL SUBUNIT PROTEIN US4M"/>
    <property type="match status" value="1"/>
</dbReference>
<dbReference type="Pfam" id="PF00163">
    <property type="entry name" value="Ribosomal_S4"/>
    <property type="match status" value="1"/>
</dbReference>
<dbReference type="Pfam" id="PF01479">
    <property type="entry name" value="S4"/>
    <property type="match status" value="1"/>
</dbReference>
<dbReference type="SMART" id="SM01390">
    <property type="entry name" value="Ribosomal_S4"/>
    <property type="match status" value="1"/>
</dbReference>
<dbReference type="SMART" id="SM00363">
    <property type="entry name" value="S4"/>
    <property type="match status" value="1"/>
</dbReference>
<dbReference type="SUPFAM" id="SSF55174">
    <property type="entry name" value="Alpha-L RNA-binding motif"/>
    <property type="match status" value="1"/>
</dbReference>
<dbReference type="PROSITE" id="PS00632">
    <property type="entry name" value="RIBOSOMAL_S4"/>
    <property type="match status" value="1"/>
</dbReference>
<dbReference type="PROSITE" id="PS50889">
    <property type="entry name" value="S4"/>
    <property type="match status" value="1"/>
</dbReference>
<evidence type="ECO:0000255" key="1">
    <source>
        <dbReference type="HAMAP-Rule" id="MF_01306"/>
    </source>
</evidence>
<evidence type="ECO:0000305" key="2"/>
<reference key="1">
    <citation type="submission" date="2007-05" db="EMBL/GenBank/DDBJ databases">
        <title>Complete sequence of chromosome of Psychrobacter sp. PRwf-1.</title>
        <authorList>
            <consortium name="US DOE Joint Genome Institute"/>
            <person name="Copeland A."/>
            <person name="Lucas S."/>
            <person name="Lapidus A."/>
            <person name="Barry K."/>
            <person name="Detter J.C."/>
            <person name="Glavina del Rio T."/>
            <person name="Hammon N."/>
            <person name="Israni S."/>
            <person name="Dalin E."/>
            <person name="Tice H."/>
            <person name="Pitluck S."/>
            <person name="Chain P."/>
            <person name="Malfatti S."/>
            <person name="Shin M."/>
            <person name="Vergez L."/>
            <person name="Schmutz J."/>
            <person name="Larimer F."/>
            <person name="Land M."/>
            <person name="Hauser L."/>
            <person name="Kyrpides N."/>
            <person name="Kim E."/>
            <person name="Tiedje J."/>
            <person name="Richardson P."/>
        </authorList>
    </citation>
    <scope>NUCLEOTIDE SEQUENCE [LARGE SCALE GENOMIC DNA]</scope>
    <source>
        <strain>PRwf-1</strain>
    </source>
</reference>
<comment type="function">
    <text evidence="1">One of the primary rRNA binding proteins, it binds directly to 16S rRNA where it nucleates assembly of the body of the 30S subunit.</text>
</comment>
<comment type="function">
    <text evidence="1">With S5 and S12 plays an important role in translational accuracy.</text>
</comment>
<comment type="subunit">
    <text evidence="1">Part of the 30S ribosomal subunit. Contacts protein S5. The interaction surface between S4 and S5 is involved in control of translational fidelity.</text>
</comment>
<comment type="similarity">
    <text evidence="1">Belongs to the universal ribosomal protein uS4 family.</text>
</comment>
<sequence>MARYIGPKLKLSRREGTDLQLKSGVKPYDVKTKKAGRVPGQHGNTRNKASEYSLQLREKQKVKRMYGVLERQFANYYKESARARGATGEHLLQMLERRLDNVVYRMGFGSTRAEARQLVSHRAVMIKKAGRDEFVRVNIPSIQVQDGDVIAIHEKAKEQLRIKNAIELATQRGIPEWLEVDHSKMQGTFKQAPDRIDLPAEITESLIVELYSK</sequence>
<keyword id="KW-0687">Ribonucleoprotein</keyword>
<keyword id="KW-0689">Ribosomal protein</keyword>
<keyword id="KW-0694">RNA-binding</keyword>
<keyword id="KW-0699">rRNA-binding</keyword>
<proteinExistence type="inferred from homology"/>
<protein>
    <recommendedName>
        <fullName evidence="1">Small ribosomal subunit protein uS4</fullName>
    </recommendedName>
    <alternativeName>
        <fullName evidence="2">30S ribosomal protein S4</fullName>
    </alternativeName>
</protein>
<gene>
    <name evidence="1" type="primary">rpsD</name>
    <name type="ordered locus">PsycPRwf_0449</name>
</gene>
<feature type="chain" id="PRO_0000322323" description="Small ribosomal subunit protein uS4">
    <location>
        <begin position="1"/>
        <end position="213"/>
    </location>
</feature>
<feature type="domain" description="S4 RNA-binding" evidence="1">
    <location>
        <begin position="97"/>
        <end position="165"/>
    </location>
</feature>
<organism>
    <name type="scientific">Psychrobacter sp. (strain PRwf-1)</name>
    <dbReference type="NCBI Taxonomy" id="349106"/>
    <lineage>
        <taxon>Bacteria</taxon>
        <taxon>Pseudomonadati</taxon>
        <taxon>Pseudomonadota</taxon>
        <taxon>Gammaproteobacteria</taxon>
        <taxon>Moraxellales</taxon>
        <taxon>Moraxellaceae</taxon>
        <taxon>Psychrobacter</taxon>
    </lineage>
</organism>